<evidence type="ECO:0000255" key="1"/>
<evidence type="ECO:0000269" key="2">
    <source>
    </source>
</evidence>
<evidence type="ECO:0000269" key="3">
    <source>
    </source>
</evidence>
<evidence type="ECO:0000269" key="4">
    <source>
    </source>
</evidence>
<evidence type="ECO:0000269" key="5">
    <source>
    </source>
</evidence>
<evidence type="ECO:0000269" key="6">
    <source>
    </source>
</evidence>
<evidence type="ECO:0000269" key="7">
    <source>
    </source>
</evidence>
<evidence type="ECO:0000269" key="8">
    <source>
    </source>
</evidence>
<evidence type="ECO:0000269" key="9">
    <source>
    </source>
</evidence>
<evidence type="ECO:0000305" key="10"/>
<evidence type="ECO:0007829" key="11">
    <source>
        <dbReference type="PDB" id="1QHL"/>
    </source>
</evidence>
<evidence type="ECO:0007829" key="12">
    <source>
        <dbReference type="PDB" id="2WMM"/>
    </source>
</evidence>
<evidence type="ECO:0007829" key="13">
    <source>
        <dbReference type="PDB" id="3IBP"/>
    </source>
</evidence>
<evidence type="ECO:0007829" key="14">
    <source>
        <dbReference type="PDB" id="4MN4"/>
    </source>
</evidence>
<evidence type="ECO:0007829" key="15">
    <source>
        <dbReference type="PDB" id="6H2X"/>
    </source>
</evidence>
<feature type="chain" id="PRO_0000068214" description="Chromosome partition protein MukB">
    <location>
        <begin position="1"/>
        <end position="1486"/>
    </location>
</feature>
<feature type="region of interest" description="Sufficient for ParC binding">
    <location>
        <begin position="645"/>
        <end position="804"/>
    </location>
</feature>
<feature type="region of interest" description="Flexible hinge">
    <location>
        <begin position="666"/>
        <end position="783"/>
    </location>
</feature>
<feature type="coiled-coil region" evidence="1">
    <location>
        <begin position="326"/>
        <end position="418"/>
    </location>
</feature>
<feature type="coiled-coil region" evidence="1">
    <location>
        <begin position="444"/>
        <end position="480"/>
    </location>
</feature>
<feature type="coiled-coil region" evidence="1">
    <location>
        <begin position="509"/>
        <end position="603"/>
    </location>
</feature>
<feature type="coiled-coil region" evidence="1">
    <location>
        <begin position="835"/>
        <end position="923"/>
    </location>
</feature>
<feature type="coiled-coil region" evidence="1">
    <location>
        <begin position="977"/>
        <end position="1115"/>
    </location>
</feature>
<feature type="coiled-coil region" evidence="1">
    <location>
        <begin position="1209"/>
        <end position="1266"/>
    </location>
</feature>
<feature type="binding site" evidence="1">
    <location>
        <begin position="34"/>
        <end position="41"/>
    </location>
    <ligand>
        <name>ATP</name>
        <dbReference type="ChEBI" id="CHEBI:30616"/>
    </ligand>
</feature>
<feature type="mutagenesis site" description="In mukB106; no effect." evidence="2">
    <original>S</original>
    <variation>F</variation>
    <location>
        <position position="33"/>
    </location>
</feature>
<feature type="mutagenesis site" description="No effect." evidence="2">
    <original>K</original>
    <variation>L</variation>
    <location>
        <position position="40"/>
    </location>
</feature>
<feature type="mutagenesis site" description="Does not rescue a ts-mutant of MukB." evidence="7">
    <original>E</original>
    <variation>A</variation>
    <location>
        <position position="688"/>
    </location>
</feature>
<feature type="mutagenesis site" description="Does not rescue a ts-mutant of MukB; less binding of ParC." evidence="7">
    <original>D</original>
    <variation>A</variation>
    <location>
        <position position="692"/>
    </location>
</feature>
<feature type="mutagenesis site" description="In mukB33; no effect." evidence="2">
    <original>D</original>
    <variation>N</variation>
    <location>
        <position position="1201"/>
    </location>
</feature>
<feature type="mutagenesis site" description="Abolishes DNA-binding, but remains associated with MukE and MukF." evidence="2">
    <original>V</original>
    <variation>L</variation>
    <location>
        <position position="1381"/>
    </location>
</feature>
<feature type="mutagenesis site" description="Abolishes association with MukE and MukF, but still binds DNA." evidence="2">
    <original>L</original>
    <variation>P</variation>
    <location>
        <position position="1403"/>
    </location>
</feature>
<feature type="mutagenesis site" description="No effect." evidence="2">
    <original>F</original>
    <variation>L</variation>
    <location>
        <position position="1404"/>
    </location>
</feature>
<feature type="mutagenesis site" description="No effect." evidence="2">
    <original>D</original>
    <variation>N</variation>
    <location>
        <position position="1406"/>
    </location>
</feature>
<feature type="mutagenesis site" description="No effect." evidence="2">
    <original>M</original>
    <variation>L</variation>
    <location>
        <position position="1428"/>
    </location>
</feature>
<feature type="mutagenesis site" description="Abolishes association with MukE and MukF, but still binds DNA." evidence="2">
    <original>Q</original>
    <variation>R</variation>
    <location>
        <position position="1429"/>
    </location>
</feature>
<feature type="sequence conflict" description="In Ref. 1; CAA40776 and 2; BAA06510." evidence="10" ref="1 2">
    <original>A</original>
    <variation>R</variation>
    <location>
        <position position="266"/>
    </location>
</feature>
<feature type="sequence conflict" description="In Ref. 1; CAA40776." evidence="10" ref="1">
    <original>EH</original>
    <variation>DD</variation>
    <location>
        <begin position="318"/>
        <end position="319"/>
    </location>
</feature>
<feature type="sequence conflict" description="In Ref. 1; CAA40776." evidence="10" ref="1">
    <original>H</original>
    <variation>D</variation>
    <location>
        <position position="1134"/>
    </location>
</feature>
<feature type="sequence conflict" description="In Ref. 1; CAA40776." evidence="10" ref="1">
    <original>SE</original>
    <variation>VQ</variation>
    <location>
        <begin position="1174"/>
        <end position="1175"/>
    </location>
</feature>
<feature type="sequence conflict" description="In Ref. 1; CAA40776 and 2; BAA06510." evidence="10" ref="1 2">
    <location>
        <begin position="1276"/>
        <end position="1277"/>
    </location>
</feature>
<feature type="sequence conflict" description="In Ref. 1; CAA40776." evidence="10" ref="1">
    <original>WLRAESGALSTGEAIGTGMSILVM</original>
    <variation>CCAQSLVHCRPVRRWYRYVDSGV</variation>
    <location>
        <begin position="1357"/>
        <end position="1380"/>
    </location>
</feature>
<feature type="sequence conflict" description="In Ref. 1; CAA40776." evidence="10" ref="1">
    <original>RRLRGKDISPCRLLFLDEAARLDARSIATLFELCERLQMQLIIAAPENISPEKGTTYKLVRKVFQNTEHVHVVGLRGFAPQLPETLPGTDEAPSQAS</original>
    <variation>AACAVKISLLAACCSSMKQRDWMLVLSPRCLNCVSVCKCNSSSQRRKISARRKAPPINWCVKSSRIPNTFMSSACEDLRRNSLKRFQELTKRLLRRVKIKQQCRLFFFRKLRFCTKKVAHYGALFFKLLYIRLCKNVRRLYTEDKPDE</variation>
    <location>
        <begin position="1390"/>
        <end position="1486"/>
    </location>
</feature>
<feature type="strand" evidence="11">
    <location>
        <begin position="6"/>
        <end position="15"/>
    </location>
</feature>
<feature type="strand" evidence="11">
    <location>
        <begin position="18"/>
        <end position="23"/>
    </location>
</feature>
<feature type="helix" evidence="11">
    <location>
        <begin position="25"/>
        <end position="33"/>
    </location>
</feature>
<feature type="helix" evidence="11">
    <location>
        <begin position="38"/>
        <end position="51"/>
    </location>
</feature>
<feature type="turn" evidence="11">
    <location>
        <begin position="55"/>
        <end position="57"/>
    </location>
</feature>
<feature type="helix" evidence="11">
    <location>
        <begin position="78"/>
        <end position="80"/>
    </location>
</feature>
<feature type="strand" evidence="11">
    <location>
        <begin position="83"/>
        <end position="93"/>
    </location>
</feature>
<feature type="strand" evidence="11">
    <location>
        <begin position="99"/>
        <end position="108"/>
    </location>
</feature>
<feature type="turn" evidence="11">
    <location>
        <begin position="112"/>
        <end position="114"/>
    </location>
</feature>
<feature type="strand" evidence="11">
    <location>
        <begin position="116"/>
        <end position="125"/>
    </location>
</feature>
<feature type="helix" evidence="11">
    <location>
        <begin position="132"/>
        <end position="136"/>
    </location>
</feature>
<feature type="strand" evidence="11">
    <location>
        <begin position="141"/>
        <end position="143"/>
    </location>
</feature>
<feature type="helix" evidence="11">
    <location>
        <begin position="150"/>
        <end position="158"/>
    </location>
</feature>
<feature type="strand" evidence="11">
    <location>
        <begin position="164"/>
        <end position="167"/>
    </location>
</feature>
<feature type="helix" evidence="11">
    <location>
        <begin position="171"/>
        <end position="180"/>
    </location>
</feature>
<feature type="strand" evidence="11">
    <location>
        <begin position="183"/>
        <end position="186"/>
    </location>
</feature>
<feature type="helix" evidence="11">
    <location>
        <begin position="191"/>
        <end position="205"/>
    </location>
</feature>
<feature type="strand" evidence="11">
    <location>
        <begin position="206"/>
        <end position="208"/>
    </location>
</feature>
<feature type="helix" evidence="11">
    <location>
        <begin position="210"/>
        <end position="220"/>
    </location>
</feature>
<feature type="helix" evidence="15">
    <location>
        <begin position="339"/>
        <end position="429"/>
    </location>
</feature>
<feature type="turn" evidence="15">
    <location>
        <begin position="437"/>
        <end position="439"/>
    </location>
</feature>
<feature type="helix" evidence="15">
    <location>
        <begin position="440"/>
        <end position="460"/>
    </location>
</feature>
<feature type="helix" evidence="15">
    <location>
        <begin position="463"/>
        <end position="485"/>
    </location>
</feature>
<feature type="helix" evidence="15">
    <location>
        <begin position="491"/>
        <end position="493"/>
    </location>
</feature>
<feature type="helix" evidence="15">
    <location>
        <begin position="494"/>
        <end position="512"/>
    </location>
</feature>
<feature type="helix" evidence="15">
    <location>
        <begin position="515"/>
        <end position="523"/>
    </location>
</feature>
<feature type="helix" evidence="13">
    <location>
        <begin position="573"/>
        <end position="617"/>
    </location>
</feature>
<feature type="helix" evidence="12">
    <location>
        <begin position="645"/>
        <end position="663"/>
    </location>
</feature>
<feature type="helix" evidence="12">
    <location>
        <begin position="674"/>
        <end position="681"/>
    </location>
</feature>
<feature type="helix" evidence="12">
    <location>
        <begin position="686"/>
        <end position="689"/>
    </location>
</feature>
<feature type="helix" evidence="12">
    <location>
        <begin position="690"/>
        <end position="692"/>
    </location>
</feature>
<feature type="turn" evidence="12">
    <location>
        <begin position="695"/>
        <end position="697"/>
    </location>
</feature>
<feature type="helix" evidence="12">
    <location>
        <begin position="698"/>
        <end position="704"/>
    </location>
</feature>
<feature type="helix" evidence="12">
    <location>
        <begin position="706"/>
        <end position="710"/>
    </location>
</feature>
<feature type="strand" evidence="12">
    <location>
        <begin position="712"/>
        <end position="715"/>
    </location>
</feature>
<feature type="helix" evidence="12">
    <location>
        <begin position="717"/>
        <end position="719"/>
    </location>
</feature>
<feature type="helix" evidence="12">
    <location>
        <begin position="721"/>
        <end position="724"/>
    </location>
</feature>
<feature type="strand" evidence="12">
    <location>
        <begin position="732"/>
        <end position="739"/>
    </location>
</feature>
<feature type="strand" evidence="14">
    <location>
        <begin position="743"/>
        <end position="745"/>
    </location>
</feature>
<feature type="strand" evidence="12">
    <location>
        <begin position="751"/>
        <end position="754"/>
    </location>
</feature>
<feature type="strand" evidence="12">
    <location>
        <begin position="757"/>
        <end position="763"/>
    </location>
</feature>
<feature type="strand" evidence="12">
    <location>
        <begin position="766"/>
        <end position="771"/>
    </location>
</feature>
<feature type="helix" evidence="12">
    <location>
        <begin position="780"/>
        <end position="802"/>
    </location>
</feature>
<feature type="turn" evidence="13">
    <location>
        <begin position="825"/>
        <end position="828"/>
    </location>
</feature>
<feature type="strand" evidence="13">
    <location>
        <begin position="829"/>
        <end position="831"/>
    </location>
</feature>
<feature type="helix" evidence="13">
    <location>
        <begin position="834"/>
        <end position="853"/>
    </location>
</feature>
<feature type="helix" evidence="15">
    <location>
        <begin position="894"/>
        <end position="920"/>
    </location>
</feature>
<feature type="helix" evidence="15">
    <location>
        <begin position="927"/>
        <end position="930"/>
    </location>
</feature>
<feature type="helix" evidence="15">
    <location>
        <begin position="934"/>
        <end position="965"/>
    </location>
</feature>
<feature type="helix" evidence="15">
    <location>
        <begin position="968"/>
        <end position="972"/>
    </location>
</feature>
<feature type="helix" evidence="15">
    <location>
        <begin position="973"/>
        <end position="977"/>
    </location>
</feature>
<feature type="helix" evidence="15">
    <location>
        <begin position="979"/>
        <end position="1045"/>
    </location>
</feature>
<sequence>MIERGKFRSLTLINWNGFFARTFDLDELVTTLSGGNGAGKSTTMAAFVTALIPDLTLLHFRNTTEAGATSGSRDKGLHGKLKAGVCYSMLDTINSRHQRVVVGVRLQQVAGRDRKVDIKPFAIQGLPMSVQPTQLVTETLNERQARVLPLNELKDKLEAMEGVQFKQFNSITDYHSLMFDLGIIARRLRSASDRSKFYRLIEASLYGGISSAITRSLRDYLLPENSGVRKAFQDMEAALRENRMTLEAIRVTQSDRDLFKHLISEATNYVAADYMRHANERRVHLDKALEFRRELHTSRQQLAAEQYKHVDMARELAEHNGAEGDLEADYQAASDHLNLVQTALRQQEKIERYEADLDELQIRLEEQNEVVAEAIERQQENEARAEAAELEVDELKSQLADYQQALDVQQTRAIQYNQAIAALNRAKELCHLPDLTADCAAEWLETFQAKELEATEKMLSLEQKMSMAQTAHSQFEQAYQLVVAINGPLARNEAWDVARELLREGVDQRHLAEQVQPLRMRLSELEQRLREQQEAERLLADFCKRQGKNFDIDELEALHQELEARIASLSDSVSNAREERMALRQEQEQLQSRIQSLMQRAPVWLAAQNSLNQLSEQCGEEFTSSQDVTEYLQQLLEREREAIVERDEVGARKNAVDEEIERLSQPGGSEDQRLNALAERFGGVLLSEIYDDVSLEDAPYFSALYGPSRHAIVVPDLSQVTEHLEGLTDCPEDLYLIEGDPQSFDDSVFSVDELEKAVVVKIADRQWRYSRFPEVPLFGRAARESRIESLHAEREVLSERFATLSFDVQKTQRLHQAFSRFIGSHLAVAFESDPEAEIRQLNSRRVELERALSNHENDNQQQRIQFEQAKEGVTALNRILPRLNLLADDSLADRVDEIRERLDEAQEAARFVQQFGNQLAKLEPIVSVLQSDPEQFEQLKEDYAYSQQMQRDARQQAFALTEVVQRRAHFSYSDSAEMLSGNSDLNEKLRERLEQAEAERTRAREALRGHAAQLSQYNQVLASLKSSYDTKKELLNDLQRELQDIGVRADSGAEERARIRRDELHAQLSNNRSRRNQLEKALTFCEAEMDNLTRKLRKLERDYFEMREQVVTAKAGWCAVMRMVKDNGVERRLHRRELAYLSADDLRSMSDKALGALRLAVADNEHLRDVLRMSEDPKRPERKIQFFVAVYQHLRERIRQDIIRTDDPVEAIEQMEIELSRLTEELTSREQKLAISSRSVANIIRKTIQREQNRIRMLNQGLQNVSFGQVNSVRLNVNVRETHAMLLDVLSEQHEQHQDLFNSNRLTFSEALAKLYQRLNPQIDMGQRTPQTIGEELLDYRNYLEMEVEVNRGSDGWLRAESGALSTGEAIGTGMSILVMVVQSWEDESRRLRGKDISPCRLLFLDEAARLDARSIATLFELCERLQMQLIIAAPENISPEKGTTYKLVRKVFQNTEHVHVVGLRGFAPQLPETLPGTDEAPSQAS</sequence>
<accession>P22523</accession>
<accession>P71227</accession>
<accession>P77164</accession>
<accession>Q47398</accession>
<gene>
    <name type="primary">mukB</name>
    <name type="ordered locus">b0924</name>
    <name type="ordered locus">JW0907</name>
</gene>
<organism>
    <name type="scientific">Escherichia coli (strain K12)</name>
    <dbReference type="NCBI Taxonomy" id="83333"/>
    <lineage>
        <taxon>Bacteria</taxon>
        <taxon>Pseudomonadati</taxon>
        <taxon>Pseudomonadota</taxon>
        <taxon>Gammaproteobacteria</taxon>
        <taxon>Enterobacterales</taxon>
        <taxon>Enterobacteriaceae</taxon>
        <taxon>Escherichia</taxon>
    </lineage>
</organism>
<proteinExistence type="evidence at protein level"/>
<dbReference type="EMBL" id="X57550">
    <property type="protein sequence ID" value="CAA40776.1"/>
    <property type="molecule type" value="Genomic_DNA"/>
</dbReference>
<dbReference type="EMBL" id="D31701">
    <property type="protein sequence ID" value="BAA06510.1"/>
    <property type="molecule type" value="Genomic_DNA"/>
</dbReference>
<dbReference type="EMBL" id="U00096">
    <property type="protein sequence ID" value="AAC74010.1"/>
    <property type="molecule type" value="Genomic_DNA"/>
</dbReference>
<dbReference type="EMBL" id="AP009048">
    <property type="protein sequence ID" value="BAA35670.1"/>
    <property type="molecule type" value="Genomic_DNA"/>
</dbReference>
<dbReference type="EMBL" id="D26440">
    <property type="protein sequence ID" value="BAA05459.1"/>
    <property type="molecule type" value="Genomic_DNA"/>
</dbReference>
<dbReference type="PIR" id="C64832">
    <property type="entry name" value="C64832"/>
</dbReference>
<dbReference type="PIR" id="JH0228">
    <property type="entry name" value="JH0228"/>
</dbReference>
<dbReference type="RefSeq" id="NP_415444.1">
    <property type="nucleotide sequence ID" value="NC_000913.3"/>
</dbReference>
<dbReference type="RefSeq" id="WP_000572698.1">
    <property type="nucleotide sequence ID" value="NZ_LN832404.1"/>
</dbReference>
<dbReference type="PDB" id="1QHL">
    <property type="method" value="X-ray"/>
    <property type="resolution" value="2.20 A"/>
    <property type="chains" value="A=1-227"/>
</dbReference>
<dbReference type="PDB" id="2WMM">
    <property type="method" value="X-ray"/>
    <property type="resolution" value="2.30 A"/>
    <property type="chains" value="A/B=645-804"/>
</dbReference>
<dbReference type="PDB" id="3IBP">
    <property type="method" value="X-ray"/>
    <property type="resolution" value="3.10 A"/>
    <property type="chains" value="A=566-863"/>
</dbReference>
<dbReference type="PDB" id="4MN4">
    <property type="method" value="X-ray"/>
    <property type="resolution" value="2.30 A"/>
    <property type="chains" value="C/D=645-804"/>
</dbReference>
<dbReference type="PDB" id="6H2X">
    <property type="method" value="X-ray"/>
    <property type="resolution" value="2.60 A"/>
    <property type="chains" value="A=333-526, A=893-1053"/>
</dbReference>
<dbReference type="PDBsum" id="1QHL"/>
<dbReference type="PDBsum" id="2WMM"/>
<dbReference type="PDBsum" id="3IBP"/>
<dbReference type="PDBsum" id="4MN4"/>
<dbReference type="PDBsum" id="6H2X"/>
<dbReference type="SMR" id="P22523"/>
<dbReference type="BioGRID" id="4261687">
    <property type="interactions" value="436"/>
</dbReference>
<dbReference type="ComplexPortal" id="CPX-1090">
    <property type="entry name" value="MukBEF condensin complex"/>
</dbReference>
<dbReference type="DIP" id="DIP-10273N"/>
<dbReference type="FunCoup" id="P22523">
    <property type="interactions" value="409"/>
</dbReference>
<dbReference type="IntAct" id="P22523">
    <property type="interactions" value="58"/>
</dbReference>
<dbReference type="MINT" id="P22523"/>
<dbReference type="STRING" id="511145.b0924"/>
<dbReference type="jPOST" id="P22523"/>
<dbReference type="PaxDb" id="511145-b0924"/>
<dbReference type="EnsemblBacteria" id="AAC74010">
    <property type="protein sequence ID" value="AAC74010"/>
    <property type="gene ID" value="b0924"/>
</dbReference>
<dbReference type="GeneID" id="945549"/>
<dbReference type="KEGG" id="ecj:JW0907"/>
<dbReference type="KEGG" id="eco:b0924"/>
<dbReference type="KEGG" id="ecoc:C3026_05680"/>
<dbReference type="PATRIC" id="fig|1411691.4.peg.1352"/>
<dbReference type="EchoBASE" id="EB0613"/>
<dbReference type="eggNOG" id="COG3096">
    <property type="taxonomic scope" value="Bacteria"/>
</dbReference>
<dbReference type="HOGENOM" id="CLU_004430_0_0_6"/>
<dbReference type="InParanoid" id="P22523"/>
<dbReference type="OMA" id="FIAVYQH"/>
<dbReference type="OrthoDB" id="6722439at2"/>
<dbReference type="PhylomeDB" id="P22523"/>
<dbReference type="BioCyc" id="EcoCyc:EG10618-MONOMER"/>
<dbReference type="EvolutionaryTrace" id="P22523"/>
<dbReference type="PRO" id="PR:P22523"/>
<dbReference type="Proteomes" id="UP000000625">
    <property type="component" value="Chromosome"/>
</dbReference>
<dbReference type="GO" id="GO:0000796">
    <property type="term" value="C:condensin complex"/>
    <property type="evidence" value="ECO:0000314"/>
    <property type="project" value="EcoCyc"/>
</dbReference>
<dbReference type="GO" id="GO:0005737">
    <property type="term" value="C:cytoplasm"/>
    <property type="evidence" value="ECO:0000318"/>
    <property type="project" value="GO_Central"/>
</dbReference>
<dbReference type="GO" id="GO:0005829">
    <property type="term" value="C:cytosol"/>
    <property type="evidence" value="ECO:0000314"/>
    <property type="project" value="EcoCyc"/>
</dbReference>
<dbReference type="GO" id="GO:0009295">
    <property type="term" value="C:nucleoid"/>
    <property type="evidence" value="ECO:0007669"/>
    <property type="project" value="UniProtKB-SubCell"/>
</dbReference>
<dbReference type="GO" id="GO:0005524">
    <property type="term" value="F:ATP binding"/>
    <property type="evidence" value="ECO:0000314"/>
    <property type="project" value="EcoCyc"/>
</dbReference>
<dbReference type="GO" id="GO:0016887">
    <property type="term" value="F:ATP hydrolysis activity"/>
    <property type="evidence" value="ECO:0000314"/>
    <property type="project" value="EcoCyc"/>
</dbReference>
<dbReference type="GO" id="GO:0003677">
    <property type="term" value="F:DNA binding"/>
    <property type="evidence" value="ECO:0000314"/>
    <property type="project" value="EcoCyc"/>
</dbReference>
<dbReference type="GO" id="GO:0005525">
    <property type="term" value="F:GTP binding"/>
    <property type="evidence" value="ECO:0000314"/>
    <property type="project" value="EcoCyc"/>
</dbReference>
<dbReference type="GO" id="GO:0042802">
    <property type="term" value="F:identical protein binding"/>
    <property type="evidence" value="ECO:0000314"/>
    <property type="project" value="EcoCyc"/>
</dbReference>
<dbReference type="GO" id="GO:0051301">
    <property type="term" value="P:cell division"/>
    <property type="evidence" value="ECO:0000315"/>
    <property type="project" value="EcoCyc"/>
</dbReference>
<dbReference type="GO" id="GO:0030261">
    <property type="term" value="P:chromosome condensation"/>
    <property type="evidence" value="ECO:0000314"/>
    <property type="project" value="EcoCyc"/>
</dbReference>
<dbReference type="GO" id="GO:0007059">
    <property type="term" value="P:chromosome segregation"/>
    <property type="evidence" value="ECO:0000315"/>
    <property type="project" value="EcoCyc"/>
</dbReference>
<dbReference type="GO" id="GO:0006260">
    <property type="term" value="P:DNA replication"/>
    <property type="evidence" value="ECO:0007669"/>
    <property type="project" value="UniProtKB-UniRule"/>
</dbReference>
<dbReference type="GO" id="GO:0007062">
    <property type="term" value="P:sister chromatid cohesion"/>
    <property type="evidence" value="ECO:0000315"/>
    <property type="project" value="EcoliWiki"/>
</dbReference>
<dbReference type="DisProt" id="DP02827"/>
<dbReference type="FunFam" id="1.20.58.850:FF:000001">
    <property type="entry name" value="Chromosome partition protein MukB"/>
    <property type="match status" value="1"/>
</dbReference>
<dbReference type="FunFam" id="3.30.70.3500:FF:000001">
    <property type="entry name" value="Chromosome partition protein MukB"/>
    <property type="match status" value="1"/>
</dbReference>
<dbReference type="FunFam" id="3.40.1140.10:FF:000001">
    <property type="entry name" value="Chromosome partition protein MukB"/>
    <property type="match status" value="1"/>
</dbReference>
<dbReference type="FunFam" id="3.40.1140.10:FF:000002">
    <property type="entry name" value="Chromosome partition protein MukB"/>
    <property type="match status" value="1"/>
</dbReference>
<dbReference type="Gene3D" id="1.20.58.850">
    <property type="match status" value="1"/>
</dbReference>
<dbReference type="Gene3D" id="3.40.1140.10">
    <property type="match status" value="2"/>
</dbReference>
<dbReference type="Gene3D" id="1.20.5.420">
    <property type="entry name" value="Immunoglobulin FC, subunit C"/>
    <property type="match status" value="1"/>
</dbReference>
<dbReference type="Gene3D" id="3.30.70.3500">
    <property type="entry name" value="MukB, hinge domain"/>
    <property type="match status" value="1"/>
</dbReference>
<dbReference type="HAMAP" id="MF_01800">
    <property type="entry name" value="MukB"/>
    <property type="match status" value="1"/>
</dbReference>
<dbReference type="InterPro" id="IPR012090">
    <property type="entry name" value="MukB"/>
</dbReference>
<dbReference type="InterPro" id="IPR050308">
    <property type="entry name" value="MukB/SMC"/>
</dbReference>
<dbReference type="InterPro" id="IPR032520">
    <property type="entry name" value="MukB_hinge"/>
</dbReference>
<dbReference type="InterPro" id="IPR042501">
    <property type="entry name" value="MukB_hinge_sf"/>
</dbReference>
<dbReference type="InterPro" id="IPR007406">
    <property type="entry name" value="MukB_N_dom"/>
</dbReference>
<dbReference type="InterPro" id="IPR027417">
    <property type="entry name" value="P-loop_NTPase"/>
</dbReference>
<dbReference type="NCBIfam" id="NF003422">
    <property type="entry name" value="PRK04863.1"/>
    <property type="match status" value="1"/>
</dbReference>
<dbReference type="PANTHER" id="PTHR42963">
    <property type="entry name" value="CHROMOSOME PARTITION PROTEIN MUKB"/>
    <property type="match status" value="1"/>
</dbReference>
<dbReference type="PANTHER" id="PTHR42963:SF1">
    <property type="entry name" value="DUF4476 DOMAIN-CONTAINING PROTEIN"/>
    <property type="match status" value="1"/>
</dbReference>
<dbReference type="Pfam" id="PF04310">
    <property type="entry name" value="MukB"/>
    <property type="match status" value="1"/>
</dbReference>
<dbReference type="Pfam" id="PF16330">
    <property type="entry name" value="MukB_hinge"/>
    <property type="match status" value="1"/>
</dbReference>
<dbReference type="Pfam" id="PF13558">
    <property type="entry name" value="SbcC_Walker_B"/>
    <property type="match status" value="1"/>
</dbReference>
<dbReference type="PIRSF" id="PIRSF005246">
    <property type="entry name" value="MukB"/>
    <property type="match status" value="1"/>
</dbReference>
<dbReference type="SUPFAM" id="SSF52540">
    <property type="entry name" value="P-loop containing nucleoside triphosphate hydrolases"/>
    <property type="match status" value="2"/>
</dbReference>
<reference key="1">
    <citation type="journal article" date="1991" name="EMBO J.">
        <title>The new gene mukB codes for a 177 kd protein with coiled-coil domains involved in chromosome partitioning of E. coli.</title>
        <authorList>
            <person name="Niki H."/>
            <person name="Jaffe A."/>
            <person name="Imamura R."/>
            <person name="Ogura T."/>
            <person name="Hiraga S."/>
        </authorList>
    </citation>
    <scope>NUCLEOTIDE SEQUENCE [GENOMIC DNA]</scope>
    <source>
        <strain>K12 / W3110 / ATCC 27325 / DSM 5911</strain>
    </source>
</reference>
<reference key="2">
    <citation type="journal article" date="1994" name="FEMS Microbiol. Lett.">
        <title>Two mutant alleles of mukB, a gene essential for chromosome partition in Escherichia coli.</title>
        <authorList>
            <person name="Yamanaka K."/>
            <person name="Mitani T."/>
            <person name="Feng J."/>
            <person name="Ogura T."/>
            <person name="Niki H."/>
            <person name="Hiraga S."/>
        </authorList>
    </citation>
    <scope>NUCLEOTIDE SEQUENCE [GENOMIC DNA]</scope>
    <scope>MUTANTS MUKB33 AND MUKB106</scope>
</reference>
<reference key="3">
    <citation type="journal article" date="1996" name="DNA Res.">
        <title>A 718-kb DNA sequence of the Escherichia coli K-12 genome corresponding to the 12.7-28.0 min region on the linkage map.</title>
        <authorList>
            <person name="Oshima T."/>
            <person name="Aiba H."/>
            <person name="Baba T."/>
            <person name="Fujita K."/>
            <person name="Hayashi K."/>
            <person name="Honjo A."/>
            <person name="Ikemoto K."/>
            <person name="Inada T."/>
            <person name="Itoh T."/>
            <person name="Kajihara M."/>
            <person name="Kanai K."/>
            <person name="Kashimoto K."/>
            <person name="Kimura S."/>
            <person name="Kitagawa M."/>
            <person name="Makino K."/>
            <person name="Masuda S."/>
            <person name="Miki T."/>
            <person name="Mizobuchi K."/>
            <person name="Mori H."/>
            <person name="Motomura K."/>
            <person name="Nakamura Y."/>
            <person name="Nashimoto H."/>
            <person name="Nishio Y."/>
            <person name="Saito N."/>
            <person name="Sampei G."/>
            <person name="Seki Y."/>
            <person name="Tagami H."/>
            <person name="Takemoto K."/>
            <person name="Wada C."/>
            <person name="Yamamoto Y."/>
            <person name="Yano M."/>
            <person name="Horiuchi T."/>
        </authorList>
    </citation>
    <scope>NUCLEOTIDE SEQUENCE [LARGE SCALE GENOMIC DNA]</scope>
    <source>
        <strain>K12 / W3110 / ATCC 27325 / DSM 5911</strain>
    </source>
</reference>
<reference key="4">
    <citation type="journal article" date="1997" name="Science">
        <title>The complete genome sequence of Escherichia coli K-12.</title>
        <authorList>
            <person name="Blattner F.R."/>
            <person name="Plunkett G. III"/>
            <person name="Bloch C.A."/>
            <person name="Perna N.T."/>
            <person name="Burland V."/>
            <person name="Riley M."/>
            <person name="Collado-Vides J."/>
            <person name="Glasner J.D."/>
            <person name="Rode C.K."/>
            <person name="Mayhew G.F."/>
            <person name="Gregor J."/>
            <person name="Davis N.W."/>
            <person name="Kirkpatrick H.A."/>
            <person name="Goeden M.A."/>
            <person name="Rose D.J."/>
            <person name="Mau B."/>
            <person name="Shao Y."/>
        </authorList>
    </citation>
    <scope>NUCLEOTIDE SEQUENCE [LARGE SCALE GENOMIC DNA]</scope>
    <source>
        <strain>K12 / MG1655 / ATCC 47076</strain>
    </source>
</reference>
<reference key="5">
    <citation type="journal article" date="2006" name="Mol. Syst. Biol.">
        <title>Highly accurate genome sequences of Escherichia coli K-12 strains MG1655 and W3110.</title>
        <authorList>
            <person name="Hayashi K."/>
            <person name="Morooka N."/>
            <person name="Yamamoto Y."/>
            <person name="Fujita K."/>
            <person name="Isono K."/>
            <person name="Choi S."/>
            <person name="Ohtsubo E."/>
            <person name="Baba T."/>
            <person name="Wanner B.L."/>
            <person name="Mori H."/>
            <person name="Horiuchi T."/>
        </authorList>
    </citation>
    <scope>NUCLEOTIDE SEQUENCE [LARGE SCALE GENOMIC DNA]</scope>
    <source>
        <strain>K12 / W3110 / ATCC 27325 / DSM 5911</strain>
    </source>
</reference>
<reference key="6">
    <citation type="journal article" date="1994" name="Mol. Gen. Genet.">
        <title>New killing system controlled by two genes located immediately upstream of the mukB gene in Escherichia coli.</title>
        <authorList>
            <person name="Feng J."/>
            <person name="Yamanaka K."/>
            <person name="Niki H."/>
            <person name="Ogura T."/>
            <person name="Hiraga S."/>
        </authorList>
    </citation>
    <scope>NUCLEOTIDE SEQUENCE [GENOMIC DNA] OF 1-44</scope>
    <source>
        <strain>K12 / W3110 / ATCC 27325 / DSM 5911</strain>
    </source>
</reference>
<reference key="7">
    <citation type="journal article" date="2010" name="Proc. Natl. Acad. Sci. U.S.A.">
        <title>Escherichia coli condensin MukB stimulates topoisomerase IV activity by a direct physical interaction.</title>
        <authorList>
            <person name="Li Y."/>
            <person name="Stewart N.K."/>
            <person name="Berger A.J."/>
            <person name="Vos S."/>
            <person name="Schoeffler A.J."/>
            <person name="Berger J.M."/>
            <person name="Chait B.T."/>
            <person name="Oakley M.G."/>
        </authorList>
    </citation>
    <scope>PROTEIN SEQUENCE OF 9-21; 41-61; 353-363 AND 681-709</scope>
    <scope>MODIFIES FUNCTION OF TOPOISOMERASE IV</scope>
    <scope>INTERACTION WITH MUKE; MUKF; ACP AND PARC</scope>
    <scope>MUTAGENESIS OF GLU-688 AND ASP-692</scope>
</reference>
<reference key="8">
    <citation type="journal article" date="1992" name="EMBO J.">
        <title>E.coli MukB protein involved in chromosome partition forms a homodimer with a rod-and-hinge structure having DNA binding and ATP/GTP binding activities.</title>
        <authorList>
            <person name="Niki H."/>
            <person name="Imamura R."/>
            <person name="Kitaoka M."/>
            <person name="Yamanaka K."/>
            <person name="Ogura T."/>
            <person name="Hiraga S."/>
        </authorList>
    </citation>
    <scope>SUBUNIT</scope>
</reference>
<reference key="9">
    <citation type="journal article" date="1998" name="FEBS Lett.">
        <title>Interaction of the N-terminal domain of MukB with the bacterial tubulin homologue FtsZ.</title>
        <authorList>
            <person name="Lockhart A."/>
            <person name="Kendrick-Jones J."/>
        </authorList>
    </citation>
    <scope>INTERACTION WITH FTSZ</scope>
</reference>
<reference key="10">
    <citation type="journal article" date="1999" name="EMBO J.">
        <title>Complex formation of MukB, MukE and MukF proteins involved in chromosome partitioning in Escherichia coli.</title>
        <authorList>
            <person name="Yamazoe M."/>
            <person name="Onogi T."/>
            <person name="Sunako Y."/>
            <person name="Niki H."/>
            <person name="Yamanaka K."/>
            <person name="Ichimura T."/>
            <person name="Hiraga S."/>
        </authorList>
    </citation>
    <scope>INTERACTION WITH MUKE AND MUKF</scope>
    <scope>MUTAGENESIS OF SER-33; LYS-40; ASP-1201; VAL-1381; LEU-1403; PHE-1404; ASP-1406; MET-1428 AND GLN-1429</scope>
</reference>
<reference key="11">
    <citation type="journal article" date="2000" name="Proc. Natl. Acad. Sci. U.S.A.">
        <title>Suppression of chromosome segregation defects of Escherichia coli muk mutants by mutations in topoisomerase I.</title>
        <authorList>
            <person name="Sawitzke J.A."/>
            <person name="Austin S."/>
        </authorList>
    </citation>
    <scope>FUNCTION</scope>
</reference>
<reference key="12">
    <citation type="journal article" date="2001" name="Mol. Microbiol.">
        <title>Distribution of the Escherichia coli structural maintenance of chromosomes (SMC)-like protein MukB in the cell.</title>
        <authorList>
            <person name="den Blaauwen T."/>
            <person name="Lindqvist A."/>
            <person name="Loewe J."/>
            <person name="Nanninga N."/>
        </authorList>
    </citation>
    <scope>SUBCELLULAR LOCATION</scope>
</reference>
<reference key="13">
    <citation type="journal article" date="2003" name="FEBS Lett.">
        <title>New partners of acyl carrier protein detected in Escherichia coli by tandem affinity purification.</title>
        <authorList>
            <person name="Gully D."/>
            <person name="Moinier D."/>
            <person name="Loiseau L."/>
            <person name="Bouveret E."/>
        </authorList>
    </citation>
    <scope>IDENTIFICATION IN A COMPLEX WITH SPOT; ISCS AND ACP</scope>
</reference>
<reference key="14">
    <citation type="journal article" date="2012" name="Mol. Microbiol.">
        <title>Isolation and identification of new inner membrane-associated proteins that localize to cell poles in Escherichia coli.</title>
        <authorList>
            <person name="Li G."/>
            <person name="Young K.D."/>
        </authorList>
    </citation>
    <scope>SUBCELLULAR LOCATION</scope>
    <source>
        <strain>K12 / MG1655 / ATCC 47076</strain>
    </source>
</reference>
<reference key="15">
    <citation type="journal article" date="1999" name="Structure">
        <title>Crystal structure of the N-terminal domain of MukB: a protein involved in chromosome partitioning.</title>
        <authorList>
            <person name="van den Ent F."/>
            <person name="Lockhart A."/>
            <person name="Kendrick-Jones J."/>
            <person name="Loewe J."/>
        </authorList>
    </citation>
    <scope>X-RAY CRYSTALLOGRAPHY (2.2 ANGSTROMS) OF 1-227</scope>
</reference>
<protein>
    <recommendedName>
        <fullName>Chromosome partition protein MukB</fullName>
    </recommendedName>
    <alternativeName>
        <fullName>Structural maintenance of chromosome-related protein</fullName>
    </alternativeName>
</protein>
<name>MUKB_ECOLI</name>
<comment type="function">
    <text evidence="3">Plays a central role in chromosome condensation, segregation and cell cycle progression. Functions as a homodimer, which is essential for chromosome partition. Involved in negative DNA supercoiling in vivo, and by this means organizes and compacts chromosomes. May achieve or facilitate chromosome segregation by condensation of DNA from both sides of a centrally located replisome during cell division. Stimulates both DNA relaxation and to a lesser extent decatenation activity of topoisomerase IV.</text>
</comment>
<comment type="subunit">
    <text evidence="2 5 6 7 9">Homodimerization via its hinge domain. Binds to DNA via its C-terminal region. Interacts, and probably forms a ternary complex, with MukE and MukF via its C-terminal region. The complex formation is stimulated by calcium or magnesium. Interacts with tubulin-related protein FtsZ. Identified in a complex with SpoT; IscS and ACP. Interacts with the ParC subunit of topoisomerase IV.</text>
</comment>
<comment type="interaction">
    <interactant intactId="EBI-542943">
        <id>P22523</id>
    </interactant>
    <interactant intactId="EBI-878544">
        <id>P0AFI2</id>
        <label>parC</label>
    </interactant>
    <organismsDiffer>false</organismsDiffer>
    <experiments>11</experiments>
</comment>
<comment type="subcellular location">
    <subcellularLocation>
        <location evidence="4 8">Cytoplasm</location>
        <location evidence="4 8">Nucleoid</location>
    </subcellularLocation>
    <text>Restricted to the nucleoid region, far from the cell poles.</text>
</comment>
<comment type="domain">
    <text>The hinge domain, which separates the large intramolecular coiled coil regions, allows the homodimerization, forming a V-shaped homodimer. The N- and C-terminus together form the head domain.</text>
</comment>
<comment type="similarity">
    <text evidence="10">Belongs to the SMC family. MukB subfamily.</text>
</comment>
<keyword id="KW-0002">3D-structure</keyword>
<keyword id="KW-0067">ATP-binding</keyword>
<keyword id="KW-0131">Cell cycle</keyword>
<keyword id="KW-0132">Cell division</keyword>
<keyword id="KW-0159">Chromosome partition</keyword>
<keyword id="KW-0175">Coiled coil</keyword>
<keyword id="KW-0963">Cytoplasm</keyword>
<keyword id="KW-0903">Direct protein sequencing</keyword>
<keyword id="KW-0226">DNA condensation</keyword>
<keyword id="KW-0238">DNA-binding</keyword>
<keyword id="KW-0547">Nucleotide-binding</keyword>
<keyword id="KW-1185">Reference proteome</keyword>